<proteinExistence type="inferred from homology"/>
<evidence type="ECO:0000255" key="1">
    <source>
        <dbReference type="HAMAP-Rule" id="MF_00910"/>
    </source>
</evidence>
<gene>
    <name evidence="1" type="primary">ftsL</name>
    <name type="ordered locus">BP3029</name>
</gene>
<name>FTSL_BORPE</name>
<protein>
    <recommendedName>
        <fullName evidence="1">Cell division protein FtsL</fullName>
    </recommendedName>
</protein>
<sequence length="92" mass="10438">MGRISLIVAALLMLSAISLVTSRYQSRQLFIELGRSQAEARDLDTNWRRLQLERAELARNARIDRAARDDLKMIPIVPDRTLYMNQPAGGAQ</sequence>
<organism>
    <name type="scientific">Bordetella pertussis (strain Tohama I / ATCC BAA-589 / NCTC 13251)</name>
    <dbReference type="NCBI Taxonomy" id="257313"/>
    <lineage>
        <taxon>Bacteria</taxon>
        <taxon>Pseudomonadati</taxon>
        <taxon>Pseudomonadota</taxon>
        <taxon>Betaproteobacteria</taxon>
        <taxon>Burkholderiales</taxon>
        <taxon>Alcaligenaceae</taxon>
        <taxon>Bordetella</taxon>
    </lineage>
</organism>
<dbReference type="EMBL" id="BX640420">
    <property type="protein sequence ID" value="CAE43300.1"/>
    <property type="molecule type" value="Genomic_DNA"/>
</dbReference>
<dbReference type="RefSeq" id="NP_881604.1">
    <property type="nucleotide sequence ID" value="NC_002929.2"/>
</dbReference>
<dbReference type="RefSeq" id="WP_010931262.1">
    <property type="nucleotide sequence ID" value="NZ_CP039022.1"/>
</dbReference>
<dbReference type="SMR" id="Q7VUP7"/>
<dbReference type="STRING" id="257313.BP3029"/>
<dbReference type="PaxDb" id="257313-BP3029"/>
<dbReference type="GeneID" id="69602952"/>
<dbReference type="KEGG" id="bpe:BP3029"/>
<dbReference type="PATRIC" id="fig|257313.5.peg.3275"/>
<dbReference type="eggNOG" id="COG3116">
    <property type="taxonomic scope" value="Bacteria"/>
</dbReference>
<dbReference type="HOGENOM" id="CLU_156524_0_3_4"/>
<dbReference type="Proteomes" id="UP000002676">
    <property type="component" value="Chromosome"/>
</dbReference>
<dbReference type="GO" id="GO:0032153">
    <property type="term" value="C:cell division site"/>
    <property type="evidence" value="ECO:0007669"/>
    <property type="project" value="UniProtKB-UniRule"/>
</dbReference>
<dbReference type="GO" id="GO:0005886">
    <property type="term" value="C:plasma membrane"/>
    <property type="evidence" value="ECO:0007669"/>
    <property type="project" value="UniProtKB-SubCell"/>
</dbReference>
<dbReference type="GO" id="GO:0043093">
    <property type="term" value="P:FtsZ-dependent cytokinesis"/>
    <property type="evidence" value="ECO:0007669"/>
    <property type="project" value="UniProtKB-UniRule"/>
</dbReference>
<dbReference type="HAMAP" id="MF_00910">
    <property type="entry name" value="FtsL"/>
    <property type="match status" value="1"/>
</dbReference>
<dbReference type="InterPro" id="IPR011922">
    <property type="entry name" value="Cell_div_FtsL"/>
</dbReference>
<dbReference type="NCBIfam" id="TIGR02209">
    <property type="entry name" value="ftsL_broad"/>
    <property type="match status" value="1"/>
</dbReference>
<dbReference type="PANTHER" id="PTHR37479">
    <property type="entry name" value="CELL DIVISION PROTEIN FTSL"/>
    <property type="match status" value="1"/>
</dbReference>
<dbReference type="PANTHER" id="PTHR37479:SF1">
    <property type="entry name" value="CELL DIVISION PROTEIN FTSL"/>
    <property type="match status" value="1"/>
</dbReference>
<dbReference type="Pfam" id="PF04999">
    <property type="entry name" value="FtsL"/>
    <property type="match status" value="1"/>
</dbReference>
<reference key="1">
    <citation type="journal article" date="2003" name="Nat. Genet.">
        <title>Comparative analysis of the genome sequences of Bordetella pertussis, Bordetella parapertussis and Bordetella bronchiseptica.</title>
        <authorList>
            <person name="Parkhill J."/>
            <person name="Sebaihia M."/>
            <person name="Preston A."/>
            <person name="Murphy L.D."/>
            <person name="Thomson N.R."/>
            <person name="Harris D.E."/>
            <person name="Holden M.T.G."/>
            <person name="Churcher C.M."/>
            <person name="Bentley S.D."/>
            <person name="Mungall K.L."/>
            <person name="Cerdeno-Tarraga A.-M."/>
            <person name="Temple L."/>
            <person name="James K.D."/>
            <person name="Harris B."/>
            <person name="Quail M.A."/>
            <person name="Achtman M."/>
            <person name="Atkin R."/>
            <person name="Baker S."/>
            <person name="Basham D."/>
            <person name="Bason N."/>
            <person name="Cherevach I."/>
            <person name="Chillingworth T."/>
            <person name="Collins M."/>
            <person name="Cronin A."/>
            <person name="Davis P."/>
            <person name="Doggett J."/>
            <person name="Feltwell T."/>
            <person name="Goble A."/>
            <person name="Hamlin N."/>
            <person name="Hauser H."/>
            <person name="Holroyd S."/>
            <person name="Jagels K."/>
            <person name="Leather S."/>
            <person name="Moule S."/>
            <person name="Norberczak H."/>
            <person name="O'Neil S."/>
            <person name="Ormond D."/>
            <person name="Price C."/>
            <person name="Rabbinowitsch E."/>
            <person name="Rutter S."/>
            <person name="Sanders M."/>
            <person name="Saunders D."/>
            <person name="Seeger K."/>
            <person name="Sharp S."/>
            <person name="Simmonds M."/>
            <person name="Skelton J."/>
            <person name="Squares R."/>
            <person name="Squares S."/>
            <person name="Stevens K."/>
            <person name="Unwin L."/>
            <person name="Whitehead S."/>
            <person name="Barrell B.G."/>
            <person name="Maskell D.J."/>
        </authorList>
    </citation>
    <scope>NUCLEOTIDE SEQUENCE [LARGE SCALE GENOMIC DNA]</scope>
    <source>
        <strain>Tohama I / ATCC BAA-589 / NCTC 13251</strain>
    </source>
</reference>
<accession>Q7VUP7</accession>
<keyword id="KW-0131">Cell cycle</keyword>
<keyword id="KW-0132">Cell division</keyword>
<keyword id="KW-0997">Cell inner membrane</keyword>
<keyword id="KW-1003">Cell membrane</keyword>
<keyword id="KW-0472">Membrane</keyword>
<keyword id="KW-1185">Reference proteome</keyword>
<keyword id="KW-0812">Transmembrane</keyword>
<keyword id="KW-1133">Transmembrane helix</keyword>
<feature type="chain" id="PRO_0000414554" description="Cell division protein FtsL">
    <location>
        <begin position="1"/>
        <end position="92"/>
    </location>
</feature>
<feature type="topological domain" description="Cytoplasmic" evidence="1">
    <location>
        <begin position="1"/>
        <end position="3"/>
    </location>
</feature>
<feature type="transmembrane region" description="Helical" evidence="1">
    <location>
        <begin position="4"/>
        <end position="21"/>
    </location>
</feature>
<feature type="topological domain" description="Periplasmic" evidence="1">
    <location>
        <begin position="22"/>
        <end position="92"/>
    </location>
</feature>
<comment type="function">
    <text evidence="1">Essential cell division protein. May link together the upstream cell division proteins, which are predominantly cytoplasmic, with the downstream cell division proteins, which are predominantly periplasmic.</text>
</comment>
<comment type="subunit">
    <text evidence="1">Part of a complex composed of FtsB, FtsL and FtsQ.</text>
</comment>
<comment type="subcellular location">
    <subcellularLocation>
        <location evidence="1">Cell inner membrane</location>
        <topology evidence="1">Single-pass type II membrane protein</topology>
    </subcellularLocation>
    <text evidence="1">Localizes to the division septum where it forms a ring structure.</text>
</comment>
<comment type="similarity">
    <text evidence="1">Belongs to the FtsL family.</text>
</comment>